<evidence type="ECO:0000255" key="1">
    <source>
        <dbReference type="PROSITE-ProRule" id="PRU00108"/>
    </source>
</evidence>
<evidence type="ECO:0000305" key="2"/>
<keyword id="KW-0217">Developmental protein</keyword>
<keyword id="KW-0238">DNA-binding</keyword>
<keyword id="KW-0371">Homeobox</keyword>
<keyword id="KW-0539">Nucleus</keyword>
<organism>
    <name type="scientific">Tripneustes gratilla</name>
    <name type="common">Hawaian sea urchin</name>
    <name type="synonym">Echinus gratilla</name>
    <dbReference type="NCBI Taxonomy" id="7673"/>
    <lineage>
        <taxon>Eukaryota</taxon>
        <taxon>Metazoa</taxon>
        <taxon>Echinodermata</taxon>
        <taxon>Eleutherozoa</taxon>
        <taxon>Echinozoa</taxon>
        <taxon>Echinoidea</taxon>
        <taxon>Euechinoidea</taxon>
        <taxon>Echinacea</taxon>
        <taxon>Temnopleuroida</taxon>
        <taxon>Toxopneustidae</taxon>
        <taxon>Tripneustes</taxon>
    </lineage>
</organism>
<comment type="subcellular location">
    <subcellularLocation>
        <location evidence="2">Nucleus</location>
    </subcellularLocation>
</comment>
<comment type="similarity">
    <text evidence="2">Belongs to the Abd-B homeobox family.</text>
</comment>
<accession>P10179</accession>
<name>HMB4_TRIGR</name>
<sequence length="107" mass="13173">INIFMKKNCKCISFFIFFSIFFCRGREAEERGHANWLSATSGRKKRCPYTKFQTLELEKEFLFNMYLTRDRRLEIARLLSLTERQVKIWFQNRRMKMKKQNRAQNYP</sequence>
<reference key="1">
    <citation type="journal article" date="1988" name="Nucleic Acids Res.">
        <title>Stage- and tissue-specific expression of two homeo box genes in sea urchin embryos and adults.</title>
        <authorList>
            <person name="Dolecki G.J."/>
            <person name="Wang G."/>
            <person name="Humphreys T."/>
        </authorList>
    </citation>
    <scope>NUCLEOTIDE SEQUENCE [GENOMIC DNA]</scope>
    <source>
        <tissue>Sperm</tissue>
    </source>
</reference>
<dbReference type="EMBL" id="X13147">
    <property type="protein sequence ID" value="CAA31545.1"/>
    <property type="molecule type" value="Genomic_DNA"/>
</dbReference>
<dbReference type="PIR" id="S05259">
    <property type="entry name" value="S05259"/>
</dbReference>
<dbReference type="SMR" id="P10179"/>
<dbReference type="GO" id="GO:0005634">
    <property type="term" value="C:nucleus"/>
    <property type="evidence" value="ECO:0007669"/>
    <property type="project" value="UniProtKB-SubCell"/>
</dbReference>
<dbReference type="GO" id="GO:0000981">
    <property type="term" value="F:DNA-binding transcription factor activity, RNA polymerase II-specific"/>
    <property type="evidence" value="ECO:0007669"/>
    <property type="project" value="InterPro"/>
</dbReference>
<dbReference type="GO" id="GO:0000978">
    <property type="term" value="F:RNA polymerase II cis-regulatory region sequence-specific DNA binding"/>
    <property type="evidence" value="ECO:0007669"/>
    <property type="project" value="TreeGrafter"/>
</dbReference>
<dbReference type="CDD" id="cd00086">
    <property type="entry name" value="homeodomain"/>
    <property type="match status" value="1"/>
</dbReference>
<dbReference type="Gene3D" id="1.10.10.60">
    <property type="entry name" value="Homeodomain-like"/>
    <property type="match status" value="1"/>
</dbReference>
<dbReference type="InterPro" id="IPR001356">
    <property type="entry name" value="HD"/>
</dbReference>
<dbReference type="InterPro" id="IPR020479">
    <property type="entry name" value="HD_metazoa"/>
</dbReference>
<dbReference type="InterPro" id="IPR017970">
    <property type="entry name" value="Homeobox_CS"/>
</dbReference>
<dbReference type="InterPro" id="IPR009057">
    <property type="entry name" value="Homeodomain-like_sf"/>
</dbReference>
<dbReference type="InterPro" id="IPR046333">
    <property type="entry name" value="HXA10/ABDB-like"/>
</dbReference>
<dbReference type="PANTHER" id="PTHR45874">
    <property type="entry name" value="HOMEOBOX PROTEIN ABDOMINAL-B"/>
    <property type="match status" value="1"/>
</dbReference>
<dbReference type="PANTHER" id="PTHR45874:SF4">
    <property type="entry name" value="HOMEOBOX PROTEIN ABDOMINAL-B"/>
    <property type="match status" value="1"/>
</dbReference>
<dbReference type="Pfam" id="PF00046">
    <property type="entry name" value="Homeodomain"/>
    <property type="match status" value="1"/>
</dbReference>
<dbReference type="PRINTS" id="PR00024">
    <property type="entry name" value="HOMEOBOX"/>
</dbReference>
<dbReference type="SMART" id="SM00389">
    <property type="entry name" value="HOX"/>
    <property type="match status" value="1"/>
</dbReference>
<dbReference type="SUPFAM" id="SSF46689">
    <property type="entry name" value="Homeodomain-like"/>
    <property type="match status" value="1"/>
</dbReference>
<dbReference type="PROSITE" id="PS00027">
    <property type="entry name" value="HOMEOBOX_1"/>
    <property type="match status" value="1"/>
</dbReference>
<dbReference type="PROSITE" id="PS50071">
    <property type="entry name" value="HOMEOBOX_2"/>
    <property type="match status" value="1"/>
</dbReference>
<feature type="chain" id="PRO_0000049013" description="Homeobox protein HB4">
    <location>
        <begin position="1" status="less than"/>
        <end position="107"/>
    </location>
</feature>
<feature type="DNA-binding region" description="Homeobox" evidence="1">
    <location>
        <begin position="42"/>
        <end position="101"/>
    </location>
</feature>
<feature type="non-terminal residue">
    <location>
        <position position="1"/>
    </location>
</feature>
<protein>
    <recommendedName>
        <fullName>Homeobox protein HB4</fullName>
    </recommendedName>
</protein>
<proteinExistence type="inferred from homology"/>